<organism>
    <name type="scientific">Mus musculus</name>
    <name type="common">Mouse</name>
    <dbReference type="NCBI Taxonomy" id="10090"/>
    <lineage>
        <taxon>Eukaryota</taxon>
        <taxon>Metazoa</taxon>
        <taxon>Chordata</taxon>
        <taxon>Craniata</taxon>
        <taxon>Vertebrata</taxon>
        <taxon>Euteleostomi</taxon>
        <taxon>Mammalia</taxon>
        <taxon>Eutheria</taxon>
        <taxon>Euarchontoglires</taxon>
        <taxon>Glires</taxon>
        <taxon>Rodentia</taxon>
        <taxon>Myomorpha</taxon>
        <taxon>Muroidea</taxon>
        <taxon>Muridae</taxon>
        <taxon>Murinae</taxon>
        <taxon>Mus</taxon>
        <taxon>Mus</taxon>
    </lineage>
</organism>
<sequence length="263" mass="28921">MSTPSPQLLVAAAQQTLGMGKRKCPPRATCLHLAGEVLAVARGLKPAVLYDCNSAGVLALQSYLEELQGLGFLEPGLHILEIGENNFIVSPEYACQHLEQTLLGTVAFVDVSRSQPHPSVRSVDQLPDLKSLIADVITRFRGLKKDVSQGVSYTRLHSSDWNLCTVFGILLGYPVSYTFDLNREDDNCLTMTPLRVFTARISWLPGQPSILLYSFSVPESLFPALKNFLSAWEKELRTRFRAQNAFADLSISSEVVTLPAVAL</sequence>
<comment type="similarity">
    <text evidence="1">Belongs to the UPF0739 family.</text>
</comment>
<protein>
    <recommendedName>
        <fullName>UPF0739 protein C1orf74 homolog</fullName>
    </recommendedName>
</protein>
<name>CA074_MOUSE</name>
<proteinExistence type="evidence at transcript level"/>
<reference key="1">
    <citation type="journal article" date="2005" name="Science">
        <title>The transcriptional landscape of the mammalian genome.</title>
        <authorList>
            <person name="Carninci P."/>
            <person name="Kasukawa T."/>
            <person name="Katayama S."/>
            <person name="Gough J."/>
            <person name="Frith M.C."/>
            <person name="Maeda N."/>
            <person name="Oyama R."/>
            <person name="Ravasi T."/>
            <person name="Lenhard B."/>
            <person name="Wells C."/>
            <person name="Kodzius R."/>
            <person name="Shimokawa K."/>
            <person name="Bajic V.B."/>
            <person name="Brenner S.E."/>
            <person name="Batalov S."/>
            <person name="Forrest A.R."/>
            <person name="Zavolan M."/>
            <person name="Davis M.J."/>
            <person name="Wilming L.G."/>
            <person name="Aidinis V."/>
            <person name="Allen J.E."/>
            <person name="Ambesi-Impiombato A."/>
            <person name="Apweiler R."/>
            <person name="Aturaliya R.N."/>
            <person name="Bailey T.L."/>
            <person name="Bansal M."/>
            <person name="Baxter L."/>
            <person name="Beisel K.W."/>
            <person name="Bersano T."/>
            <person name="Bono H."/>
            <person name="Chalk A.M."/>
            <person name="Chiu K.P."/>
            <person name="Choudhary V."/>
            <person name="Christoffels A."/>
            <person name="Clutterbuck D.R."/>
            <person name="Crowe M.L."/>
            <person name="Dalla E."/>
            <person name="Dalrymple B.P."/>
            <person name="de Bono B."/>
            <person name="Della Gatta G."/>
            <person name="di Bernardo D."/>
            <person name="Down T."/>
            <person name="Engstrom P."/>
            <person name="Fagiolini M."/>
            <person name="Faulkner G."/>
            <person name="Fletcher C.F."/>
            <person name="Fukushima T."/>
            <person name="Furuno M."/>
            <person name="Futaki S."/>
            <person name="Gariboldi M."/>
            <person name="Georgii-Hemming P."/>
            <person name="Gingeras T.R."/>
            <person name="Gojobori T."/>
            <person name="Green R.E."/>
            <person name="Gustincich S."/>
            <person name="Harbers M."/>
            <person name="Hayashi Y."/>
            <person name="Hensch T.K."/>
            <person name="Hirokawa N."/>
            <person name="Hill D."/>
            <person name="Huminiecki L."/>
            <person name="Iacono M."/>
            <person name="Ikeo K."/>
            <person name="Iwama A."/>
            <person name="Ishikawa T."/>
            <person name="Jakt M."/>
            <person name="Kanapin A."/>
            <person name="Katoh M."/>
            <person name="Kawasawa Y."/>
            <person name="Kelso J."/>
            <person name="Kitamura H."/>
            <person name="Kitano H."/>
            <person name="Kollias G."/>
            <person name="Krishnan S.P."/>
            <person name="Kruger A."/>
            <person name="Kummerfeld S.K."/>
            <person name="Kurochkin I.V."/>
            <person name="Lareau L.F."/>
            <person name="Lazarevic D."/>
            <person name="Lipovich L."/>
            <person name="Liu J."/>
            <person name="Liuni S."/>
            <person name="McWilliam S."/>
            <person name="Madan Babu M."/>
            <person name="Madera M."/>
            <person name="Marchionni L."/>
            <person name="Matsuda H."/>
            <person name="Matsuzawa S."/>
            <person name="Miki H."/>
            <person name="Mignone F."/>
            <person name="Miyake S."/>
            <person name="Morris K."/>
            <person name="Mottagui-Tabar S."/>
            <person name="Mulder N."/>
            <person name="Nakano N."/>
            <person name="Nakauchi H."/>
            <person name="Ng P."/>
            <person name="Nilsson R."/>
            <person name="Nishiguchi S."/>
            <person name="Nishikawa S."/>
            <person name="Nori F."/>
            <person name="Ohara O."/>
            <person name="Okazaki Y."/>
            <person name="Orlando V."/>
            <person name="Pang K.C."/>
            <person name="Pavan W.J."/>
            <person name="Pavesi G."/>
            <person name="Pesole G."/>
            <person name="Petrovsky N."/>
            <person name="Piazza S."/>
            <person name="Reed J."/>
            <person name="Reid J.F."/>
            <person name="Ring B.Z."/>
            <person name="Ringwald M."/>
            <person name="Rost B."/>
            <person name="Ruan Y."/>
            <person name="Salzberg S.L."/>
            <person name="Sandelin A."/>
            <person name="Schneider C."/>
            <person name="Schoenbach C."/>
            <person name="Sekiguchi K."/>
            <person name="Semple C.A."/>
            <person name="Seno S."/>
            <person name="Sessa L."/>
            <person name="Sheng Y."/>
            <person name="Shibata Y."/>
            <person name="Shimada H."/>
            <person name="Shimada K."/>
            <person name="Silva D."/>
            <person name="Sinclair B."/>
            <person name="Sperling S."/>
            <person name="Stupka E."/>
            <person name="Sugiura K."/>
            <person name="Sultana R."/>
            <person name="Takenaka Y."/>
            <person name="Taki K."/>
            <person name="Tammoja K."/>
            <person name="Tan S.L."/>
            <person name="Tang S."/>
            <person name="Taylor M.S."/>
            <person name="Tegner J."/>
            <person name="Teichmann S.A."/>
            <person name="Ueda H.R."/>
            <person name="van Nimwegen E."/>
            <person name="Verardo R."/>
            <person name="Wei C.L."/>
            <person name="Yagi K."/>
            <person name="Yamanishi H."/>
            <person name="Zabarovsky E."/>
            <person name="Zhu S."/>
            <person name="Zimmer A."/>
            <person name="Hide W."/>
            <person name="Bult C."/>
            <person name="Grimmond S.M."/>
            <person name="Teasdale R.D."/>
            <person name="Liu E.T."/>
            <person name="Brusic V."/>
            <person name="Quackenbush J."/>
            <person name="Wahlestedt C."/>
            <person name="Mattick J.S."/>
            <person name="Hume D.A."/>
            <person name="Kai C."/>
            <person name="Sasaki D."/>
            <person name="Tomaru Y."/>
            <person name="Fukuda S."/>
            <person name="Kanamori-Katayama M."/>
            <person name="Suzuki M."/>
            <person name="Aoki J."/>
            <person name="Arakawa T."/>
            <person name="Iida J."/>
            <person name="Imamura K."/>
            <person name="Itoh M."/>
            <person name="Kato T."/>
            <person name="Kawaji H."/>
            <person name="Kawagashira N."/>
            <person name="Kawashima T."/>
            <person name="Kojima M."/>
            <person name="Kondo S."/>
            <person name="Konno H."/>
            <person name="Nakano K."/>
            <person name="Ninomiya N."/>
            <person name="Nishio T."/>
            <person name="Okada M."/>
            <person name="Plessy C."/>
            <person name="Shibata K."/>
            <person name="Shiraki T."/>
            <person name="Suzuki S."/>
            <person name="Tagami M."/>
            <person name="Waki K."/>
            <person name="Watahiki A."/>
            <person name="Okamura-Oho Y."/>
            <person name="Suzuki H."/>
            <person name="Kawai J."/>
            <person name="Hayashizaki Y."/>
        </authorList>
    </citation>
    <scope>NUCLEOTIDE SEQUENCE [LARGE SCALE MRNA]</scope>
    <source>
        <strain>C57BL/6J</strain>
        <tissue>Corpus striatum</tissue>
        <tissue>Eye</tissue>
        <tissue>Pituitary</tissue>
        <tissue>Testis</tissue>
        <tissue>Thymus</tissue>
    </source>
</reference>
<reference key="2">
    <citation type="journal article" date="2004" name="Genome Res.">
        <title>The status, quality, and expansion of the NIH full-length cDNA project: the Mammalian Gene Collection (MGC).</title>
        <authorList>
            <consortium name="The MGC Project Team"/>
        </authorList>
    </citation>
    <scope>NUCLEOTIDE SEQUENCE [LARGE SCALE MRNA]</scope>
    <source>
        <tissue>Eye</tissue>
    </source>
</reference>
<feature type="chain" id="PRO_0000271093" description="UPF0739 protein C1orf74 homolog">
    <location>
        <begin position="1"/>
        <end position="263"/>
    </location>
</feature>
<accession>Q9DAE8</accession>
<keyword id="KW-1185">Reference proteome</keyword>
<dbReference type="EMBL" id="AK005889">
    <property type="protein sequence ID" value="BAB24303.1"/>
    <property type="molecule type" value="mRNA"/>
</dbReference>
<dbReference type="EMBL" id="AK037364">
    <property type="protein sequence ID" value="BAC29794.1"/>
    <property type="molecule type" value="mRNA"/>
</dbReference>
<dbReference type="EMBL" id="AK047686">
    <property type="protein sequence ID" value="BAC33124.1"/>
    <property type="molecule type" value="mRNA"/>
</dbReference>
<dbReference type="EMBL" id="AK077339">
    <property type="protein sequence ID" value="BAC36759.1"/>
    <property type="molecule type" value="mRNA"/>
</dbReference>
<dbReference type="EMBL" id="BC055955">
    <property type="protein sequence ID" value="AAH55955.1"/>
    <property type="molecule type" value="mRNA"/>
</dbReference>
<dbReference type="CCDS" id="CCDS15633.1"/>
<dbReference type="RefSeq" id="NP_001153831.1">
    <property type="nucleotide sequence ID" value="NM_001160359.1"/>
</dbReference>
<dbReference type="RefSeq" id="NP_001153832.1">
    <property type="nucleotide sequence ID" value="NM_001160360.1"/>
</dbReference>
<dbReference type="RefSeq" id="NP_851391.1">
    <property type="nucleotide sequence ID" value="NM_181048.3"/>
</dbReference>
<dbReference type="RefSeq" id="XP_006497316.1">
    <property type="nucleotide sequence ID" value="XM_006497253.5"/>
</dbReference>
<dbReference type="FunCoup" id="Q9DAE8">
    <property type="interactions" value="28"/>
</dbReference>
<dbReference type="PaxDb" id="10090-ENSMUSP00000106455"/>
<dbReference type="Antibodypedia" id="34597">
    <property type="antibodies" value="58 antibodies from 14 providers"/>
</dbReference>
<dbReference type="DNASU" id="319266"/>
<dbReference type="Ensembl" id="ENSMUST00000110831.4">
    <property type="protein sequence ID" value="ENSMUSP00000106455.3"/>
    <property type="gene ID" value="ENSMUSG00000079144.8"/>
</dbReference>
<dbReference type="Ensembl" id="ENSMUST00000160822.3">
    <property type="protein sequence ID" value="ENSMUSP00000124546.2"/>
    <property type="gene ID" value="ENSMUSG00000079144.8"/>
</dbReference>
<dbReference type="Ensembl" id="ENSMUST00000161235.3">
    <property type="protein sequence ID" value="ENSMUSP00000124191.2"/>
    <property type="gene ID" value="ENSMUSG00000079144.8"/>
</dbReference>
<dbReference type="Ensembl" id="ENSMUST00000178744.2">
    <property type="protein sequence ID" value="ENSMUSP00000136653.2"/>
    <property type="gene ID" value="ENSMUSG00000079144.8"/>
</dbReference>
<dbReference type="GeneID" id="319266"/>
<dbReference type="KEGG" id="mmu:319266"/>
<dbReference type="UCSC" id="uc007eea.2">
    <property type="organism name" value="mouse"/>
</dbReference>
<dbReference type="AGR" id="MGI:2441776"/>
<dbReference type="MGI" id="MGI:2441776">
    <property type="gene designation" value="A130010J15Rik"/>
</dbReference>
<dbReference type="VEuPathDB" id="HostDB:ENSMUSG00000079144"/>
<dbReference type="eggNOG" id="ENOG502RZ46">
    <property type="taxonomic scope" value="Eukaryota"/>
</dbReference>
<dbReference type="GeneTree" id="ENSGT00390000002240"/>
<dbReference type="HOGENOM" id="CLU_1156081_0_0_1"/>
<dbReference type="InParanoid" id="Q9DAE8"/>
<dbReference type="OMA" id="YPVTYWF"/>
<dbReference type="OrthoDB" id="10056365at2759"/>
<dbReference type="PhylomeDB" id="Q9DAE8"/>
<dbReference type="TreeFam" id="TF328609"/>
<dbReference type="BioGRID-ORCS" id="319266">
    <property type="hits" value="0 hits in 80 CRISPR screens"/>
</dbReference>
<dbReference type="PRO" id="PR:Q9DAE8"/>
<dbReference type="Proteomes" id="UP000000589">
    <property type="component" value="Chromosome 1"/>
</dbReference>
<dbReference type="RNAct" id="Q9DAE8">
    <property type="molecule type" value="protein"/>
</dbReference>
<dbReference type="Bgee" id="ENSMUSG00000079144">
    <property type="expression patterns" value="Expressed in spermatid and 196 other cell types or tissues"/>
</dbReference>
<dbReference type="ExpressionAtlas" id="Q9DAE8">
    <property type="expression patterns" value="baseline and differential"/>
</dbReference>
<dbReference type="InterPro" id="IPR027850">
    <property type="entry name" value="DUF4504"/>
</dbReference>
<dbReference type="PANTHER" id="PTHR31366">
    <property type="entry name" value="UPF0739 PROTEIN C1ORF74"/>
    <property type="match status" value="1"/>
</dbReference>
<dbReference type="PANTHER" id="PTHR31366:SF2">
    <property type="entry name" value="UPF0739 PROTEIN C1ORF74"/>
    <property type="match status" value="1"/>
</dbReference>
<dbReference type="Pfam" id="PF14953">
    <property type="entry name" value="DUF4504"/>
    <property type="match status" value="1"/>
</dbReference>
<evidence type="ECO:0000305" key="1"/>